<comment type="function">
    <text evidence="1">Catalyzes the interconversion of 2-phosphoglycerate and 3-phosphoglycerate.</text>
</comment>
<comment type="catalytic activity">
    <reaction evidence="1">
        <text>(2R)-2-phosphoglycerate = (2R)-3-phosphoglycerate</text>
        <dbReference type="Rhea" id="RHEA:15901"/>
        <dbReference type="ChEBI" id="CHEBI:58272"/>
        <dbReference type="ChEBI" id="CHEBI:58289"/>
        <dbReference type="EC" id="5.4.2.11"/>
    </reaction>
</comment>
<comment type="pathway">
    <text evidence="1">Carbohydrate degradation; glycolysis; pyruvate from D-glyceraldehyde 3-phosphate: step 3/5.</text>
</comment>
<comment type="subunit">
    <text evidence="1">Homodimer.</text>
</comment>
<comment type="similarity">
    <text evidence="1">Belongs to the phosphoglycerate mutase family. BPG-dependent PGAM subfamily.</text>
</comment>
<protein>
    <recommendedName>
        <fullName evidence="1">2,3-bisphosphoglycerate-dependent phosphoglycerate mutase</fullName>
        <shortName evidence="1">BPG-dependent PGAM</shortName>
        <shortName evidence="1">PGAM</shortName>
        <shortName evidence="1">Phosphoglyceromutase</shortName>
        <shortName evidence="1">dPGM</shortName>
        <ecNumber evidence="1">5.4.2.11</ecNumber>
    </recommendedName>
</protein>
<evidence type="ECO:0000255" key="1">
    <source>
        <dbReference type="HAMAP-Rule" id="MF_01039"/>
    </source>
</evidence>
<proteinExistence type="inferred from homology"/>
<dbReference type="EC" id="5.4.2.11" evidence="1"/>
<dbReference type="EMBL" id="CP001600">
    <property type="protein sequence ID" value="ACR70013.1"/>
    <property type="molecule type" value="Genomic_DNA"/>
</dbReference>
<dbReference type="RefSeq" id="WP_015872110.1">
    <property type="nucleotide sequence ID" value="NZ_CP169062.1"/>
</dbReference>
<dbReference type="SMR" id="C5BEL3"/>
<dbReference type="STRING" id="67780.B6E78_06160"/>
<dbReference type="GeneID" id="69539732"/>
<dbReference type="KEGG" id="eic:NT01EI_2846"/>
<dbReference type="PATRIC" id="fig|634503.3.peg.2550"/>
<dbReference type="HOGENOM" id="CLU_033323_1_1_6"/>
<dbReference type="OrthoDB" id="9781415at2"/>
<dbReference type="UniPathway" id="UPA00109">
    <property type="reaction ID" value="UER00186"/>
</dbReference>
<dbReference type="Proteomes" id="UP000001485">
    <property type="component" value="Chromosome"/>
</dbReference>
<dbReference type="GO" id="GO:0004619">
    <property type="term" value="F:phosphoglycerate mutase activity"/>
    <property type="evidence" value="ECO:0007669"/>
    <property type="project" value="UniProtKB-EC"/>
</dbReference>
<dbReference type="GO" id="GO:0006094">
    <property type="term" value="P:gluconeogenesis"/>
    <property type="evidence" value="ECO:0007669"/>
    <property type="project" value="UniProtKB-UniRule"/>
</dbReference>
<dbReference type="GO" id="GO:0006096">
    <property type="term" value="P:glycolytic process"/>
    <property type="evidence" value="ECO:0007669"/>
    <property type="project" value="UniProtKB-UniRule"/>
</dbReference>
<dbReference type="CDD" id="cd07067">
    <property type="entry name" value="HP_PGM_like"/>
    <property type="match status" value="1"/>
</dbReference>
<dbReference type="FunFam" id="3.40.50.1240:FF:000003">
    <property type="entry name" value="2,3-bisphosphoglycerate-dependent phosphoglycerate mutase"/>
    <property type="match status" value="1"/>
</dbReference>
<dbReference type="Gene3D" id="3.40.50.1240">
    <property type="entry name" value="Phosphoglycerate mutase-like"/>
    <property type="match status" value="1"/>
</dbReference>
<dbReference type="HAMAP" id="MF_01039">
    <property type="entry name" value="PGAM_GpmA"/>
    <property type="match status" value="1"/>
</dbReference>
<dbReference type="InterPro" id="IPR013078">
    <property type="entry name" value="His_Pase_superF_clade-1"/>
</dbReference>
<dbReference type="InterPro" id="IPR029033">
    <property type="entry name" value="His_PPase_superfam"/>
</dbReference>
<dbReference type="InterPro" id="IPR001345">
    <property type="entry name" value="PG/BPGM_mutase_AS"/>
</dbReference>
<dbReference type="InterPro" id="IPR005952">
    <property type="entry name" value="Phosphogly_mut1"/>
</dbReference>
<dbReference type="NCBIfam" id="TIGR01258">
    <property type="entry name" value="pgm_1"/>
    <property type="match status" value="1"/>
</dbReference>
<dbReference type="NCBIfam" id="NF010713">
    <property type="entry name" value="PRK14115.1"/>
    <property type="match status" value="1"/>
</dbReference>
<dbReference type="PANTHER" id="PTHR11931">
    <property type="entry name" value="PHOSPHOGLYCERATE MUTASE"/>
    <property type="match status" value="1"/>
</dbReference>
<dbReference type="Pfam" id="PF00300">
    <property type="entry name" value="His_Phos_1"/>
    <property type="match status" value="1"/>
</dbReference>
<dbReference type="PIRSF" id="PIRSF000709">
    <property type="entry name" value="6PFK_2-Ptase"/>
    <property type="match status" value="1"/>
</dbReference>
<dbReference type="SMART" id="SM00855">
    <property type="entry name" value="PGAM"/>
    <property type="match status" value="1"/>
</dbReference>
<dbReference type="SUPFAM" id="SSF53254">
    <property type="entry name" value="Phosphoglycerate mutase-like"/>
    <property type="match status" value="1"/>
</dbReference>
<dbReference type="PROSITE" id="PS00175">
    <property type="entry name" value="PG_MUTASE"/>
    <property type="match status" value="1"/>
</dbReference>
<reference key="1">
    <citation type="submission" date="2009-03" db="EMBL/GenBank/DDBJ databases">
        <title>Complete genome sequence of Edwardsiella ictaluri 93-146.</title>
        <authorList>
            <person name="Williams M.L."/>
            <person name="Gillaspy A.F."/>
            <person name="Dyer D.W."/>
            <person name="Thune R.L."/>
            <person name="Waldbieser G.C."/>
            <person name="Schuster S.C."/>
            <person name="Gipson J."/>
            <person name="Zaitshik J."/>
            <person name="Landry C."/>
            <person name="Lawrence M.L."/>
        </authorList>
    </citation>
    <scope>NUCLEOTIDE SEQUENCE [LARGE SCALE GENOMIC DNA]</scope>
    <source>
        <strain>93-146</strain>
    </source>
</reference>
<accession>C5BEL3</accession>
<feature type="chain" id="PRO_1000213389" description="2,3-bisphosphoglycerate-dependent phosphoglycerate mutase">
    <location>
        <begin position="1"/>
        <end position="250"/>
    </location>
</feature>
<feature type="active site" description="Tele-phosphohistidine intermediate" evidence="1">
    <location>
        <position position="11"/>
    </location>
</feature>
<feature type="active site" description="Proton donor/acceptor" evidence="1">
    <location>
        <position position="89"/>
    </location>
</feature>
<feature type="binding site" evidence="1">
    <location>
        <begin position="10"/>
        <end position="17"/>
    </location>
    <ligand>
        <name>substrate</name>
    </ligand>
</feature>
<feature type="binding site" evidence="1">
    <location>
        <begin position="23"/>
        <end position="24"/>
    </location>
    <ligand>
        <name>substrate</name>
    </ligand>
</feature>
<feature type="binding site" evidence="1">
    <location>
        <position position="62"/>
    </location>
    <ligand>
        <name>substrate</name>
    </ligand>
</feature>
<feature type="binding site" evidence="1">
    <location>
        <begin position="89"/>
        <end position="92"/>
    </location>
    <ligand>
        <name>substrate</name>
    </ligand>
</feature>
<feature type="binding site" evidence="1">
    <location>
        <position position="100"/>
    </location>
    <ligand>
        <name>substrate</name>
    </ligand>
</feature>
<feature type="binding site" evidence="1">
    <location>
        <begin position="116"/>
        <end position="117"/>
    </location>
    <ligand>
        <name>substrate</name>
    </ligand>
</feature>
<feature type="binding site" evidence="1">
    <location>
        <begin position="185"/>
        <end position="186"/>
    </location>
    <ligand>
        <name>substrate</name>
    </ligand>
</feature>
<feature type="site" description="Transition state stabilizer" evidence="1">
    <location>
        <position position="184"/>
    </location>
</feature>
<organism>
    <name type="scientific">Edwardsiella ictaluri (strain 93-146)</name>
    <dbReference type="NCBI Taxonomy" id="634503"/>
    <lineage>
        <taxon>Bacteria</taxon>
        <taxon>Pseudomonadati</taxon>
        <taxon>Pseudomonadota</taxon>
        <taxon>Gammaproteobacteria</taxon>
        <taxon>Enterobacterales</taxon>
        <taxon>Hafniaceae</taxon>
        <taxon>Edwardsiella</taxon>
    </lineage>
</organism>
<keyword id="KW-0312">Gluconeogenesis</keyword>
<keyword id="KW-0324">Glycolysis</keyword>
<keyword id="KW-0413">Isomerase</keyword>
<name>GPMA_EDWI9</name>
<sequence length="250" mass="28214">MAVTKLVLLRHGESEWNRENRFTGWTDVELSEKGRQEALAAGRLLKAQGFSFDIAYTSVLKRAIHTLWHVLDKLDQPWLPVEKSWKLNERHYGALQGLNKAETAQQYGDEQVKLWRRAFAITPPALTPDDPRYPGHDPRYAALSADELPLTESLATTIERVIPYWQQQIAPRISAGERIIIAAHGNSLRALVKHLDHLSEGEIVELNIPTGVPLVYEFDKNMRPLHHYYLGDATEIAARQSAVANQGKAG</sequence>
<gene>
    <name evidence="1" type="primary">gpmA</name>
    <name type="ordered locus">NT01EI_2846</name>
</gene>